<reference key="1">
    <citation type="journal article" date="2009" name="Genome Res.">
        <title>Newly introduced genomic prophage islands are critical determinants of in vivo competitiveness in the Liverpool epidemic strain of Pseudomonas aeruginosa.</title>
        <authorList>
            <person name="Winstanley C."/>
            <person name="Langille M.G.I."/>
            <person name="Fothergill J.L."/>
            <person name="Kukavica-Ibrulj I."/>
            <person name="Paradis-Bleau C."/>
            <person name="Sanschagrin F."/>
            <person name="Thomson N.R."/>
            <person name="Winsor G.L."/>
            <person name="Quail M.A."/>
            <person name="Lennard N."/>
            <person name="Bignell A."/>
            <person name="Clarke L."/>
            <person name="Seeger K."/>
            <person name="Saunders D."/>
            <person name="Harris D."/>
            <person name="Parkhill J."/>
            <person name="Hancock R.E.W."/>
            <person name="Brinkman F.S.L."/>
            <person name="Levesque R.C."/>
        </authorList>
    </citation>
    <scope>NUCLEOTIDE SEQUENCE [LARGE SCALE GENOMIC DNA]</scope>
    <source>
        <strain>LESB58</strain>
    </source>
</reference>
<accession>B7V309</accession>
<proteinExistence type="inferred from homology"/>
<name>RL20_PSEA8</name>
<feature type="chain" id="PRO_1000122356" description="Large ribosomal subunit protein bL20">
    <location>
        <begin position="1"/>
        <end position="118"/>
    </location>
</feature>
<gene>
    <name evidence="1" type="primary">rplT</name>
    <name type="ordered locus">PLES_23421</name>
</gene>
<sequence length="118" mass="13365">MARVKRGVIARRRHKKILKLAKGYYGARSRVFRVAKQAVIKAGQYAYRDRRQRKRQFRALWIARINAGARQNGLSYSRLIAGLKKAAIEIDRKVLADLAVNEKAAFTAIVEKAKASLA</sequence>
<dbReference type="EMBL" id="FM209186">
    <property type="protein sequence ID" value="CAW27069.1"/>
    <property type="molecule type" value="Genomic_DNA"/>
</dbReference>
<dbReference type="RefSeq" id="WP_003099086.1">
    <property type="nucleotide sequence ID" value="NC_011770.1"/>
</dbReference>
<dbReference type="SMR" id="B7V309"/>
<dbReference type="GeneID" id="79913049"/>
<dbReference type="KEGG" id="pag:PLES_23421"/>
<dbReference type="HOGENOM" id="CLU_123265_0_1_6"/>
<dbReference type="GO" id="GO:1990904">
    <property type="term" value="C:ribonucleoprotein complex"/>
    <property type="evidence" value="ECO:0007669"/>
    <property type="project" value="UniProtKB-KW"/>
</dbReference>
<dbReference type="GO" id="GO:0005840">
    <property type="term" value="C:ribosome"/>
    <property type="evidence" value="ECO:0007669"/>
    <property type="project" value="UniProtKB-KW"/>
</dbReference>
<dbReference type="GO" id="GO:0019843">
    <property type="term" value="F:rRNA binding"/>
    <property type="evidence" value="ECO:0007669"/>
    <property type="project" value="UniProtKB-UniRule"/>
</dbReference>
<dbReference type="GO" id="GO:0003735">
    <property type="term" value="F:structural constituent of ribosome"/>
    <property type="evidence" value="ECO:0007669"/>
    <property type="project" value="InterPro"/>
</dbReference>
<dbReference type="GO" id="GO:0000027">
    <property type="term" value="P:ribosomal large subunit assembly"/>
    <property type="evidence" value="ECO:0007669"/>
    <property type="project" value="UniProtKB-UniRule"/>
</dbReference>
<dbReference type="GO" id="GO:0006412">
    <property type="term" value="P:translation"/>
    <property type="evidence" value="ECO:0007669"/>
    <property type="project" value="InterPro"/>
</dbReference>
<dbReference type="CDD" id="cd07026">
    <property type="entry name" value="Ribosomal_L20"/>
    <property type="match status" value="1"/>
</dbReference>
<dbReference type="FunFam" id="1.10.1900.20:FF:000001">
    <property type="entry name" value="50S ribosomal protein L20"/>
    <property type="match status" value="1"/>
</dbReference>
<dbReference type="Gene3D" id="6.10.160.10">
    <property type="match status" value="1"/>
</dbReference>
<dbReference type="Gene3D" id="1.10.1900.20">
    <property type="entry name" value="Ribosomal protein L20"/>
    <property type="match status" value="1"/>
</dbReference>
<dbReference type="HAMAP" id="MF_00382">
    <property type="entry name" value="Ribosomal_bL20"/>
    <property type="match status" value="1"/>
</dbReference>
<dbReference type="InterPro" id="IPR005813">
    <property type="entry name" value="Ribosomal_bL20"/>
</dbReference>
<dbReference type="InterPro" id="IPR049946">
    <property type="entry name" value="RIBOSOMAL_L20_CS"/>
</dbReference>
<dbReference type="InterPro" id="IPR035566">
    <property type="entry name" value="Ribosomal_protein_bL20_C"/>
</dbReference>
<dbReference type="NCBIfam" id="TIGR01032">
    <property type="entry name" value="rplT_bact"/>
    <property type="match status" value="1"/>
</dbReference>
<dbReference type="PANTHER" id="PTHR10986">
    <property type="entry name" value="39S RIBOSOMAL PROTEIN L20"/>
    <property type="match status" value="1"/>
</dbReference>
<dbReference type="Pfam" id="PF00453">
    <property type="entry name" value="Ribosomal_L20"/>
    <property type="match status" value="1"/>
</dbReference>
<dbReference type="PRINTS" id="PR00062">
    <property type="entry name" value="RIBOSOMALL20"/>
</dbReference>
<dbReference type="SUPFAM" id="SSF74731">
    <property type="entry name" value="Ribosomal protein L20"/>
    <property type="match status" value="1"/>
</dbReference>
<dbReference type="PROSITE" id="PS00937">
    <property type="entry name" value="RIBOSOMAL_L20"/>
    <property type="match status" value="1"/>
</dbReference>
<keyword id="KW-0687">Ribonucleoprotein</keyword>
<keyword id="KW-0689">Ribosomal protein</keyword>
<keyword id="KW-0694">RNA-binding</keyword>
<keyword id="KW-0699">rRNA-binding</keyword>
<organism>
    <name type="scientific">Pseudomonas aeruginosa (strain LESB58)</name>
    <dbReference type="NCBI Taxonomy" id="557722"/>
    <lineage>
        <taxon>Bacteria</taxon>
        <taxon>Pseudomonadati</taxon>
        <taxon>Pseudomonadota</taxon>
        <taxon>Gammaproteobacteria</taxon>
        <taxon>Pseudomonadales</taxon>
        <taxon>Pseudomonadaceae</taxon>
        <taxon>Pseudomonas</taxon>
    </lineage>
</organism>
<evidence type="ECO:0000255" key="1">
    <source>
        <dbReference type="HAMAP-Rule" id="MF_00382"/>
    </source>
</evidence>
<evidence type="ECO:0000305" key="2"/>
<comment type="function">
    <text evidence="1">Binds directly to 23S ribosomal RNA and is necessary for the in vitro assembly process of the 50S ribosomal subunit. It is not involved in the protein synthesizing functions of that subunit.</text>
</comment>
<comment type="similarity">
    <text evidence="1">Belongs to the bacterial ribosomal protein bL20 family.</text>
</comment>
<protein>
    <recommendedName>
        <fullName evidence="1">Large ribosomal subunit protein bL20</fullName>
    </recommendedName>
    <alternativeName>
        <fullName evidence="2">50S ribosomal protein L20</fullName>
    </alternativeName>
</protein>